<feature type="chain" id="PRO_0000333934" description="Cell division protein ZapB">
    <location>
        <begin position="1"/>
        <end position="81"/>
    </location>
</feature>
<feature type="region of interest" description="Disordered" evidence="2">
    <location>
        <begin position="36"/>
        <end position="67"/>
    </location>
</feature>
<feature type="coiled-coil region" evidence="1">
    <location>
        <begin position="5"/>
        <end position="81"/>
    </location>
</feature>
<feature type="compositionally biased region" description="Polar residues" evidence="2">
    <location>
        <begin position="37"/>
        <end position="47"/>
    </location>
</feature>
<feature type="compositionally biased region" description="Basic and acidic residues" evidence="2">
    <location>
        <begin position="48"/>
        <end position="62"/>
    </location>
</feature>
<feature type="modified residue" description="N6-acetyllysine" evidence="1">
    <location>
        <position position="10"/>
    </location>
</feature>
<keyword id="KW-0007">Acetylation</keyword>
<keyword id="KW-0131">Cell cycle</keyword>
<keyword id="KW-0132">Cell division</keyword>
<keyword id="KW-0175">Coiled coil</keyword>
<keyword id="KW-0963">Cytoplasm</keyword>
<keyword id="KW-1185">Reference proteome</keyword>
<keyword id="KW-0717">Septation</keyword>
<protein>
    <recommendedName>
        <fullName evidence="1">Cell division protein ZapB</fullName>
    </recommendedName>
</protein>
<organism>
    <name type="scientific">Shigella dysenteriae serotype 1 (strain Sd197)</name>
    <dbReference type="NCBI Taxonomy" id="300267"/>
    <lineage>
        <taxon>Bacteria</taxon>
        <taxon>Pseudomonadati</taxon>
        <taxon>Pseudomonadota</taxon>
        <taxon>Gammaproteobacteria</taxon>
        <taxon>Enterobacterales</taxon>
        <taxon>Enterobacteriaceae</taxon>
        <taxon>Shigella</taxon>
    </lineage>
</organism>
<proteinExistence type="inferred from homology"/>
<reference key="1">
    <citation type="journal article" date="2005" name="Nucleic Acids Res.">
        <title>Genome dynamics and diversity of Shigella species, the etiologic agents of bacillary dysentery.</title>
        <authorList>
            <person name="Yang F."/>
            <person name="Yang J."/>
            <person name="Zhang X."/>
            <person name="Chen L."/>
            <person name="Jiang Y."/>
            <person name="Yan Y."/>
            <person name="Tang X."/>
            <person name="Wang J."/>
            <person name="Xiong Z."/>
            <person name="Dong J."/>
            <person name="Xue Y."/>
            <person name="Zhu Y."/>
            <person name="Xu X."/>
            <person name="Sun L."/>
            <person name="Chen S."/>
            <person name="Nie H."/>
            <person name="Peng J."/>
            <person name="Xu J."/>
            <person name="Wang Y."/>
            <person name="Yuan Z."/>
            <person name="Wen Y."/>
            <person name="Yao Z."/>
            <person name="Shen Y."/>
            <person name="Qiang B."/>
            <person name="Hou Y."/>
            <person name="Yu J."/>
            <person name="Jin Q."/>
        </authorList>
    </citation>
    <scope>NUCLEOTIDE SEQUENCE [LARGE SCALE GENOMIC DNA]</scope>
    <source>
        <strain>Sd197</strain>
    </source>
</reference>
<name>ZAPB_SHIDS</name>
<sequence>MTMSLEVFEKLEAKVQQAIDTITLLQMEIEELKEKNNSLSQEVQNAQHQREELERENNHLKEQQNGWQERLQALLGRMEEV</sequence>
<comment type="function">
    <text evidence="1">Non-essential, abundant cell division factor that is required for proper Z-ring formation. It is recruited early to the divisome by direct interaction with FtsZ, stimulating Z-ring assembly and thereby promoting cell division earlier in the cell cycle. Its recruitment to the Z-ring requires functional FtsA or ZipA.</text>
</comment>
<comment type="subunit">
    <text evidence="1">Homodimer. The ends of the coiled-coil dimer bind to each other, forming polymers. Interacts with FtsZ.</text>
</comment>
<comment type="subcellular location">
    <subcellularLocation>
        <location>Cytoplasm</location>
    </subcellularLocation>
    <text evidence="1">Localizes to the septum at mid-cell, in a FtsZ-like pattern.</text>
</comment>
<comment type="similarity">
    <text evidence="1">Belongs to the ZapB family.</text>
</comment>
<dbReference type="EMBL" id="CP000034">
    <property type="protein sequence ID" value="ABB63761.1"/>
    <property type="molecule type" value="Genomic_DNA"/>
</dbReference>
<dbReference type="RefSeq" id="WP_001296623.1">
    <property type="nucleotide sequence ID" value="NC_007606.1"/>
</dbReference>
<dbReference type="RefSeq" id="YP_405252.1">
    <property type="nucleotide sequence ID" value="NC_007606.1"/>
</dbReference>
<dbReference type="SMR" id="Q32A94"/>
<dbReference type="STRING" id="300267.SDY_3816"/>
<dbReference type="EnsemblBacteria" id="ABB63761">
    <property type="protein sequence ID" value="ABB63761"/>
    <property type="gene ID" value="SDY_3816"/>
</dbReference>
<dbReference type="GeneID" id="93777970"/>
<dbReference type="KEGG" id="sdy:SDY_3816"/>
<dbReference type="PATRIC" id="fig|300267.13.peg.4507"/>
<dbReference type="HOGENOM" id="CLU_171174_2_0_6"/>
<dbReference type="Proteomes" id="UP000002716">
    <property type="component" value="Chromosome"/>
</dbReference>
<dbReference type="GO" id="GO:0005737">
    <property type="term" value="C:cytoplasm"/>
    <property type="evidence" value="ECO:0007669"/>
    <property type="project" value="UniProtKB-SubCell"/>
</dbReference>
<dbReference type="GO" id="GO:0000917">
    <property type="term" value="P:division septum assembly"/>
    <property type="evidence" value="ECO:0007669"/>
    <property type="project" value="UniProtKB-KW"/>
</dbReference>
<dbReference type="GO" id="GO:0043093">
    <property type="term" value="P:FtsZ-dependent cytokinesis"/>
    <property type="evidence" value="ECO:0007669"/>
    <property type="project" value="UniProtKB-UniRule"/>
</dbReference>
<dbReference type="FunFam" id="1.20.5.340:FF:000014">
    <property type="entry name" value="Cell division protein ZapB"/>
    <property type="match status" value="1"/>
</dbReference>
<dbReference type="Gene3D" id="1.20.5.340">
    <property type="match status" value="1"/>
</dbReference>
<dbReference type="HAMAP" id="MF_01196">
    <property type="entry name" value="ZapB"/>
    <property type="match status" value="1"/>
</dbReference>
<dbReference type="InterPro" id="IPR009252">
    <property type="entry name" value="Cell_div_ZapB"/>
</dbReference>
<dbReference type="NCBIfam" id="NF011951">
    <property type="entry name" value="PRK15422.1"/>
    <property type="match status" value="1"/>
</dbReference>
<dbReference type="Pfam" id="PF06005">
    <property type="entry name" value="ZapB"/>
    <property type="match status" value="1"/>
</dbReference>
<evidence type="ECO:0000255" key="1">
    <source>
        <dbReference type="HAMAP-Rule" id="MF_01196"/>
    </source>
</evidence>
<evidence type="ECO:0000256" key="2">
    <source>
        <dbReference type="SAM" id="MobiDB-lite"/>
    </source>
</evidence>
<gene>
    <name evidence="1" type="primary">zapB</name>
    <name type="ordered locus">SDY_3816</name>
</gene>
<accession>Q32A94</accession>